<organism>
    <name type="scientific">Ruegeria pomeroyi (strain ATCC 700808 / DSM 15171 / DSS-3)</name>
    <name type="common">Silicibacter pomeroyi</name>
    <dbReference type="NCBI Taxonomy" id="246200"/>
    <lineage>
        <taxon>Bacteria</taxon>
        <taxon>Pseudomonadati</taxon>
        <taxon>Pseudomonadota</taxon>
        <taxon>Alphaproteobacteria</taxon>
        <taxon>Rhodobacterales</taxon>
        <taxon>Roseobacteraceae</taxon>
        <taxon>Ruegeria</taxon>
    </lineage>
</organism>
<accession>Q5LVV1</accession>
<gene>
    <name evidence="1" type="primary">hpsN</name>
    <name type="ordered locus">SPO0594</name>
</gene>
<proteinExistence type="evidence at protein level"/>
<evidence type="ECO:0000255" key="1">
    <source>
        <dbReference type="HAMAP-Rule" id="MF_02228"/>
    </source>
</evidence>
<evidence type="ECO:0000305" key="2"/>
<evidence type="ECO:0007829" key="3">
    <source>
        <dbReference type="PDB" id="8WWE"/>
    </source>
</evidence>
<feature type="chain" id="PRO_0000135846" description="Sulfopropanediol 3-dehydrogenase">
    <location>
        <begin position="1"/>
        <end position="435"/>
    </location>
</feature>
<feature type="active site" description="Proton acceptor" evidence="1">
    <location>
        <position position="319"/>
    </location>
</feature>
<feature type="active site" description="Proton acceptor" evidence="1">
    <location>
        <position position="320"/>
    </location>
</feature>
<feature type="binding site" evidence="1">
    <location>
        <position position="119"/>
    </location>
    <ligand>
        <name>NAD(+)</name>
        <dbReference type="ChEBI" id="CHEBI:57540"/>
    </ligand>
</feature>
<feature type="binding site" evidence="1">
    <location>
        <position position="181"/>
    </location>
    <ligand>
        <name>NAD(+)</name>
        <dbReference type="ChEBI" id="CHEBI:57540"/>
    </ligand>
</feature>
<feature type="binding site" evidence="1">
    <location>
        <position position="204"/>
    </location>
    <ligand>
        <name>NAD(+)</name>
        <dbReference type="ChEBI" id="CHEBI:57540"/>
    </ligand>
</feature>
<feature type="binding site" evidence="1">
    <location>
        <position position="249"/>
    </location>
    <ligand>
        <name>Zn(2+)</name>
        <dbReference type="ChEBI" id="CHEBI:29105"/>
    </ligand>
</feature>
<feature type="binding site" evidence="1">
    <location>
        <position position="252"/>
    </location>
    <ligand>
        <name>Zn(2+)</name>
        <dbReference type="ChEBI" id="CHEBI:29105"/>
    </ligand>
</feature>
<feature type="binding site" evidence="1">
    <location>
        <position position="353"/>
    </location>
    <ligand>
        <name>Zn(2+)</name>
        <dbReference type="ChEBI" id="CHEBI:29105"/>
    </ligand>
</feature>
<feature type="binding site" evidence="1">
    <location>
        <position position="412"/>
    </location>
    <ligand>
        <name>Zn(2+)</name>
        <dbReference type="ChEBI" id="CHEBI:29105"/>
    </ligand>
</feature>
<feature type="strand" evidence="3">
    <location>
        <begin position="4"/>
        <end position="7"/>
    </location>
</feature>
<feature type="strand" evidence="3">
    <location>
        <begin position="10"/>
        <end position="12"/>
    </location>
</feature>
<feature type="turn" evidence="3">
    <location>
        <begin position="14"/>
        <end position="16"/>
    </location>
</feature>
<feature type="helix" evidence="3">
    <location>
        <begin position="20"/>
        <end position="34"/>
    </location>
</feature>
<feature type="helix" evidence="3">
    <location>
        <begin position="36"/>
        <end position="47"/>
    </location>
</feature>
<feature type="helix" evidence="3">
    <location>
        <begin position="57"/>
        <end position="64"/>
    </location>
</feature>
<feature type="helix" evidence="3">
    <location>
        <begin position="69"/>
        <end position="90"/>
    </location>
</feature>
<feature type="strand" evidence="3">
    <location>
        <begin position="96"/>
        <end position="101"/>
    </location>
</feature>
<feature type="strand" evidence="3">
    <location>
        <begin position="104"/>
        <end position="112"/>
    </location>
</feature>
<feature type="strand" evidence="3">
    <location>
        <begin position="114"/>
        <end position="119"/>
    </location>
</feature>
<feature type="helix" evidence="3">
    <location>
        <begin position="125"/>
        <end position="141"/>
    </location>
</feature>
<feature type="strand" evidence="3">
    <location>
        <begin position="144"/>
        <end position="150"/>
    </location>
</feature>
<feature type="turn" evidence="3">
    <location>
        <begin position="154"/>
        <end position="156"/>
    </location>
</feature>
<feature type="helix" evidence="3">
    <location>
        <begin position="160"/>
        <end position="169"/>
    </location>
</feature>
<feature type="strand" evidence="3">
    <location>
        <begin position="172"/>
        <end position="176"/>
    </location>
</feature>
<feature type="helix" evidence="3">
    <location>
        <begin position="179"/>
        <end position="187"/>
    </location>
</feature>
<feature type="strand" evidence="3">
    <location>
        <begin position="197"/>
        <end position="200"/>
    </location>
</feature>
<feature type="helix" evidence="3">
    <location>
        <begin position="205"/>
        <end position="215"/>
    </location>
</feature>
<feature type="strand" evidence="3">
    <location>
        <begin position="229"/>
        <end position="233"/>
    </location>
</feature>
<feature type="helix" evidence="3">
    <location>
        <begin position="239"/>
        <end position="247"/>
    </location>
</feature>
<feature type="strand" evidence="3">
    <location>
        <begin position="258"/>
        <end position="263"/>
    </location>
</feature>
<feature type="helix" evidence="3">
    <location>
        <begin position="265"/>
        <end position="280"/>
    </location>
</feature>
<feature type="helix" evidence="3">
    <location>
        <begin position="284"/>
        <end position="297"/>
    </location>
</feature>
<feature type="strand" evidence="3">
    <location>
        <begin position="298"/>
        <end position="302"/>
    </location>
</feature>
<feature type="helix" evidence="3">
    <location>
        <begin position="306"/>
        <end position="316"/>
    </location>
</feature>
<feature type="strand" evidence="3">
    <location>
        <begin position="319"/>
        <end position="326"/>
    </location>
</feature>
<feature type="helix" evidence="3">
    <location>
        <begin position="328"/>
        <end position="334"/>
    </location>
</feature>
<feature type="strand" evidence="3">
    <location>
        <begin position="339"/>
        <end position="345"/>
    </location>
</feature>
<feature type="helix" evidence="3">
    <location>
        <begin position="376"/>
        <end position="379"/>
    </location>
</feature>
<feature type="strand" evidence="3">
    <location>
        <begin position="380"/>
        <end position="387"/>
    </location>
</feature>
<feature type="helix" evidence="3">
    <location>
        <begin position="395"/>
        <end position="403"/>
    </location>
</feature>
<comment type="function">
    <text evidence="1">Catalyzes the NAD-dependent oxidation of (R)-2,3-dihydroxypropane-1-sulfonate to (R)-3-sulfolactate.</text>
</comment>
<comment type="catalytic activity">
    <reaction evidence="1">
        <text>(2R)-3-sulfopropanediol + 2 NAD(+) + H2O = (2R)-3-sulfolactate + 2 NADH + 3 H(+)</text>
        <dbReference type="Rhea" id="RHEA:28074"/>
        <dbReference type="ChEBI" id="CHEBI:15377"/>
        <dbReference type="ChEBI" id="CHEBI:15378"/>
        <dbReference type="ChEBI" id="CHEBI:57540"/>
        <dbReference type="ChEBI" id="CHEBI:57945"/>
        <dbReference type="ChEBI" id="CHEBI:58738"/>
        <dbReference type="ChEBI" id="CHEBI:60997"/>
        <dbReference type="EC" id="1.1.1.308"/>
    </reaction>
</comment>
<comment type="cofactor">
    <cofactor evidence="1">
        <name>Zn(2+)</name>
        <dbReference type="ChEBI" id="CHEBI:29105"/>
    </cofactor>
    <text evidence="1">Binds 1 zinc ion per subunit.</text>
</comment>
<comment type="similarity">
    <text evidence="1 2">Belongs to the histidinol dehydrogenase family. HpsN subfamily.</text>
</comment>
<sequence>MTIEYLKKASLTSKSDASDVQETVRAILADIEAGGDQVALDYAAKFDRYEGSIILSPEEIEAACAKVPEKLKADIRFAHDNVRRFAETQKATLTDVELEVVPGVITGQKAIPVDAAGCYVPGGRYSHIASAIMTVTTAKVAGCKHIMACSPPRPGVGVAPAIVYAAHICGADTIMAIGGVQGVASMAFGLFGLPKAKILVGPGNQFVAEAKRMLFGRVGIDMIAGPTDSLILADRTADPHIVTTDLVSQAEHGYNSPVWLVTDDRALAEKVIEMIPSYIADLPEVNRDNAAAAWRDYAEVILCADREEMAATSDRYAPEHLTVMAEDLDWWLDRLSCYGSLFLGEESTVSYGDKAAGTNHVLPTSGAASYTGGLSVHKYMKIVTWQRGTREGYKPVAEATARIARLEGMEGHARAADVRLAKYFPDETFDLTANG</sequence>
<reference key="1">
    <citation type="journal article" date="2004" name="Nature">
        <title>Genome sequence of Silicibacter pomeroyi reveals adaptations to the marine environment.</title>
        <authorList>
            <person name="Moran M.A."/>
            <person name="Buchan A."/>
            <person name="Gonzalez J.M."/>
            <person name="Heidelberg J.F."/>
            <person name="Whitman W.B."/>
            <person name="Kiene R.P."/>
            <person name="Henriksen J.R."/>
            <person name="King G.M."/>
            <person name="Belas R."/>
            <person name="Fuqua C."/>
            <person name="Brinkac L.M."/>
            <person name="Lewis M."/>
            <person name="Johri S."/>
            <person name="Weaver B."/>
            <person name="Pai G."/>
            <person name="Eisen J.A."/>
            <person name="Rahe E."/>
            <person name="Sheldon W.M."/>
            <person name="Ye W."/>
            <person name="Miller T.R."/>
            <person name="Carlton J."/>
            <person name="Rasko D.A."/>
            <person name="Paulsen I.T."/>
            <person name="Ren Q."/>
            <person name="Daugherty S.C."/>
            <person name="DeBoy R.T."/>
            <person name="Dodson R.J."/>
            <person name="Durkin A.S."/>
            <person name="Madupu R."/>
            <person name="Nelson W.C."/>
            <person name="Sullivan S.A."/>
            <person name="Rosovitz M.J."/>
            <person name="Haft D.H."/>
            <person name="Selengut J."/>
            <person name="Ward N."/>
        </authorList>
    </citation>
    <scope>NUCLEOTIDE SEQUENCE [LARGE SCALE GENOMIC DNA]</scope>
    <source>
        <strain>ATCC 700808 / DSM 15171 / DSS-3</strain>
    </source>
</reference>
<reference key="2">
    <citation type="journal article" date="2014" name="Stand. Genomic Sci.">
        <title>An updated genome annotation for the model marine bacterium Ruegeria pomeroyi DSS-3.</title>
        <authorList>
            <person name="Rivers A.R."/>
            <person name="Smith C.B."/>
            <person name="Moran M.A."/>
        </authorList>
    </citation>
    <scope>GENOME REANNOTATION</scope>
    <source>
        <strain>ATCC 700808 / DSM 15171 / DSS-3</strain>
    </source>
</reference>
<keyword id="KW-0002">3D-structure</keyword>
<keyword id="KW-0479">Metal-binding</keyword>
<keyword id="KW-0520">NAD</keyword>
<keyword id="KW-0560">Oxidoreductase</keyword>
<keyword id="KW-1185">Reference proteome</keyword>
<keyword id="KW-0862">Zinc</keyword>
<protein>
    <recommendedName>
        <fullName evidence="1">Sulfopropanediol 3-dehydrogenase</fullName>
        <ecNumber evidence="1">1.1.1.308</ecNumber>
    </recommendedName>
    <alternativeName>
        <fullName evidence="1">2,3-dihydroxypropane-1-sulfonate 3-dehydrogenase (sulfolactate forming)</fullName>
        <shortName evidence="1">DHPS 3-dehydrogenase (sulfolactate forming)</shortName>
    </alternativeName>
</protein>
<dbReference type="EC" id="1.1.1.308" evidence="1"/>
<dbReference type="EMBL" id="CP000031">
    <property type="protein sequence ID" value="AAV93909.1"/>
    <property type="molecule type" value="Genomic_DNA"/>
</dbReference>
<dbReference type="RefSeq" id="WP_011046350.1">
    <property type="nucleotide sequence ID" value="NC_003911.12"/>
</dbReference>
<dbReference type="PDB" id="8WWE">
    <property type="method" value="X-ray"/>
    <property type="resolution" value="2.90 A"/>
    <property type="chains" value="A/B/C/D=1-407"/>
</dbReference>
<dbReference type="PDBsum" id="8WWE"/>
<dbReference type="SMR" id="Q5LVV1"/>
<dbReference type="STRING" id="246200.SPO0594"/>
<dbReference type="PaxDb" id="246200-SPO0594"/>
<dbReference type="KEGG" id="sil:SPO0594"/>
<dbReference type="eggNOG" id="COG0141">
    <property type="taxonomic scope" value="Bacteria"/>
</dbReference>
<dbReference type="HOGENOM" id="CLU_006732_3_3_5"/>
<dbReference type="OrthoDB" id="9805269at2"/>
<dbReference type="Proteomes" id="UP000001023">
    <property type="component" value="Chromosome"/>
</dbReference>
<dbReference type="GO" id="GO:0005829">
    <property type="term" value="C:cytosol"/>
    <property type="evidence" value="ECO:0007669"/>
    <property type="project" value="TreeGrafter"/>
</dbReference>
<dbReference type="GO" id="GO:0004399">
    <property type="term" value="F:histidinol dehydrogenase activity"/>
    <property type="evidence" value="ECO:0007669"/>
    <property type="project" value="InterPro"/>
</dbReference>
<dbReference type="GO" id="GO:0051287">
    <property type="term" value="F:NAD binding"/>
    <property type="evidence" value="ECO:0007669"/>
    <property type="project" value="InterPro"/>
</dbReference>
<dbReference type="GO" id="GO:0008270">
    <property type="term" value="F:zinc ion binding"/>
    <property type="evidence" value="ECO:0007669"/>
    <property type="project" value="UniProtKB-UniRule"/>
</dbReference>
<dbReference type="GO" id="GO:0000105">
    <property type="term" value="P:L-histidine biosynthetic process"/>
    <property type="evidence" value="ECO:0007669"/>
    <property type="project" value="InterPro"/>
</dbReference>
<dbReference type="CDD" id="cd06572">
    <property type="entry name" value="Histidinol_dh"/>
    <property type="match status" value="1"/>
</dbReference>
<dbReference type="FunFam" id="3.40.50.1980:FF:000001">
    <property type="entry name" value="Histidinol dehydrogenase"/>
    <property type="match status" value="1"/>
</dbReference>
<dbReference type="Gene3D" id="1.20.5.1300">
    <property type="match status" value="1"/>
</dbReference>
<dbReference type="Gene3D" id="3.40.50.1980">
    <property type="entry name" value="Nitrogenase molybdenum iron protein domain"/>
    <property type="match status" value="2"/>
</dbReference>
<dbReference type="HAMAP" id="MF_02228">
    <property type="entry name" value="Sulfopropanediol_dehydrog"/>
    <property type="match status" value="1"/>
</dbReference>
<dbReference type="InterPro" id="IPR016161">
    <property type="entry name" value="Ald_DH/histidinol_DH"/>
</dbReference>
<dbReference type="InterPro" id="IPR001692">
    <property type="entry name" value="Histidinol_DH_CS"/>
</dbReference>
<dbReference type="InterPro" id="IPR022695">
    <property type="entry name" value="Histidinol_DH_monofunct"/>
</dbReference>
<dbReference type="InterPro" id="IPR012131">
    <property type="entry name" value="Hstdl_DH"/>
</dbReference>
<dbReference type="InterPro" id="IPR043678">
    <property type="entry name" value="Sulfopropanediol_dehydrog_HpsN"/>
</dbReference>
<dbReference type="NCBIfam" id="TIGR00069">
    <property type="entry name" value="hisD"/>
    <property type="match status" value="1"/>
</dbReference>
<dbReference type="PANTHER" id="PTHR21256:SF14">
    <property type="entry name" value="HISTIDINOL DEHYDROGENASE"/>
    <property type="match status" value="1"/>
</dbReference>
<dbReference type="PANTHER" id="PTHR21256">
    <property type="entry name" value="HISTIDINOL DEHYDROGENASE HDH"/>
    <property type="match status" value="1"/>
</dbReference>
<dbReference type="Pfam" id="PF00815">
    <property type="entry name" value="Histidinol_dh"/>
    <property type="match status" value="1"/>
</dbReference>
<dbReference type="PIRSF" id="PIRSF000099">
    <property type="entry name" value="Histidinol_dh"/>
    <property type="match status" value="1"/>
</dbReference>
<dbReference type="PRINTS" id="PR00083">
    <property type="entry name" value="HOLDHDRGNASE"/>
</dbReference>
<dbReference type="SUPFAM" id="SSF53720">
    <property type="entry name" value="ALDH-like"/>
    <property type="match status" value="1"/>
</dbReference>
<dbReference type="PROSITE" id="PS00611">
    <property type="entry name" value="HISOL_DEHYDROGENASE"/>
    <property type="match status" value="1"/>
</dbReference>
<name>HPSN_RUEPO</name>